<sequence length="2530" mass="267652">MLLQFLLLSLCVSVATAKVITGVFNSFDSLTWTRAGNYAYKGPNRPTWNAVLGWSLDGTSANPGDTFTLNMPCVFKFITDQTSVDLTADGVKYATCQFYSGEEFTTFSSLKCTVSNTLTSSIKALGTVTLPISFNVGGTGSLVDLESSKCFKAGTNTVTFNDGDKKISIDVDFEKTNEDASGYFIASRLIPSINKASITYVAPQCANGYTSGAMGFTIGSGDTTIDCSNVHVGITKGLNDWNFPVSSDSLSYNKTCSSTGISITYENVPAGYRPFFDVYTSVSDQNRQLKYTNDYACVGSSLQSKPFNLRLRGYNNSEANSNGFVIVATTRTVTDSTTAVTTLPFNPSVDKTKTIEILQPIPTTTITTSYVGVTTSYSTKTAPIGETATVIVDVPYHTTTTVTSEWTGTITTTTTRTNPTDSIDTVVVQVPSPNPTVTTTEYWSQSYATTTTVTAPPGGTDSVIIREPPNPTVTTTEYWSQSYATSSTVTAPPGGTDTVIIREPPNPTVTTTEYWSQSYATTTTVTAPPGGTDSVIIREPPNPTVTTTEYWSQSFATTTTITAPPGETDTVLIREPPNHTVTTTEYWSQSYVTTSTITAPPGGTDTVIIREPPNYTVTTTEYWSQSYATTTTVTAPPGGTDTVIIREPPNPTVTTTEYWSQSYATTTTVTGPPGGTDTVIIREPPNPTVTTTEYWSQSYATTTTVTAPPGGTDTVIIREPPNPTVTTTEYWSQSYATTTTVTGPPGGTDTVIIREPPNPTVTTTEYWSQSYATTTTVTAPPGGTATVIIREPPNPTVTTTEYWSQSYATTTTVTGPPGGTDTVIIREPPNPTVTTTEYWSQSYATTTTVTAPPGGTATVIIREPPNYTVTTTEYWSQSYATTTTVTGPPGGTDTVIIREPPSPTVTTTEYWSQSYATTTTVTAPPGGTATVIIREPPNPTVTTTEYWSQSYATTTTVTGPPGGTDTVIIREPPNPTVTTTEYWSQSYATTTTVTAPPGGTATVIIREPPNYTVTTTEYWSQSYATTTTVTGPPGGTDTVIIREPPSPTVTTTEYWSQSYATTTTVTAPPGGTATVIIREPPNPTVTTTEYWSQSYATTTTVTGPPGGTDTVIIREPPSPTVTTTEYWSQSYATTTTVTAPPGGTATVIIREPPNYTVTTTEYWSQSYATTTTVTGPPGGTDTVIIREPPNPTVTTTEYWSQSFATTTTVTAPPGGTDSVIIREPPNPTVTTTEYWSQSYATTTTVTAPPGGTDSVIIREPPNPTVTTTEYWSQSFATTTTVTAPPGGTDSVIIREPPNPTVTTTEYWSQSYATTTTVTAPPGGTDSVIIREPPNPTVTTTEYWSQSYATTTTVTAPPGGTATVIIREPPNYTVTTTEYWSQSYATTTTVTAPPGGTATVIIREPPNYTVTTTEYWSQSYATTTTITAPPGDTDTVIIREPPNYTVTTTEYWSQSFATTTTVTAPPGGTDSVIIREPPNPTVTTTEYWSQSYATTTTVTAPPGGTATVIIREPPNYTVTTTEYWSQSYATTTTVTAPPGGTATVIIREPPNYTVTTTEYWSQSYATTTTITAPPGDTDTVIIREPPNYTVTTTEYWSQSYATTTTVTAPPGGTDTVIIREPPNYTVTTTEYWSQSYATTTTVTAPPGGTATVIIREPPNYTVTTTEYWSQSYATTTTVTGPPGSTDTVIIREPPNPTVTTTEYWSQSYATTTTVTAPPGGTATVIIREPPNYTVTTTEYWSQSYATTTTVTAPPGGTDTVIIREPPNYTVTTTEYWSQSYATTTTVTAPPGGTDTVIIREPPSPTVTTTEYWSQSYATTTTVTAPPGGTATVIIREPPNYTVTTTEYWSESYATTTTVTGPPGGTDVILIREPPNPTVTTTEYWSESYATTTTITAPPGATDSVRIREPPNYTVTTTEYWSQSYATTTTVTAPPGGTDSVIIREPPNPTVTTTEYWSQSYATTTTVTAPPGGTATVIIREPPNYTVTTTEYWSQSYATTTTVTAPPGGTDTVIIREPPSPTVTTTEYWSQSYATTTTVTAPPGGTATVIIREPPSPTVTTTEYWSQSYATTTTVTAPPGGTATVIIREPPNYTVTTTEYWSQSYATTTTVTGPPGGTDTVIIREPPNPTVTTTEYWSQSYATTLTITAPPGGTNSVIIRVHSSTNDESSESTFSTLSVPSFSGSISVVSTVSRPHYVNSTVTHLPSSSSKPVDIPSSDVVTSTNDNSLTSLTGSENGKTSVAISTTFCDDENGCQTSIPQGSVVRTTATTTATTTTIIGDNNGSGKSKSGELSSTGSVTTNTATPDVPSTKVPSNPGAPGTGVPPPLAPSTETQTTNNVPGSPNIPATGTTDIIRESTTVSHTVTGNGNTGVPMNPNPVLTTSTSLTGATNSATNPSHETSVNTGSGGSTNIVTPPSSATATVVIPGTDNGATTKGQDTAGGNSNGSTATTNIQGGNNEPGNQPGTNTTGEPVGTTDTQSVESISQPTTLSQQTTSSLISTPLASTFDGSGSIVQHSGWLYVLLTAISIFF</sequence>
<evidence type="ECO:0000250" key="1">
    <source>
        <dbReference type="UniProtKB" id="A0A1D8PQ86"/>
    </source>
</evidence>
<evidence type="ECO:0000255" key="2"/>
<evidence type="ECO:0000255" key="3">
    <source>
        <dbReference type="PROSITE-ProRule" id="PRU00498"/>
    </source>
</evidence>
<evidence type="ECO:0000256" key="4">
    <source>
        <dbReference type="SAM" id="MobiDB-lite"/>
    </source>
</evidence>
<evidence type="ECO:0000269" key="5">
    <source>
    </source>
</evidence>
<evidence type="ECO:0000269" key="6">
    <source>
    </source>
</evidence>
<evidence type="ECO:0000269" key="7">
    <source>
    </source>
</evidence>
<evidence type="ECO:0000269" key="8">
    <source>
    </source>
</evidence>
<evidence type="ECO:0000269" key="9">
    <source>
    </source>
</evidence>
<evidence type="ECO:0000305" key="10"/>
<evidence type="ECO:0000305" key="11">
    <source>
    </source>
</evidence>
<evidence type="ECO:0000305" key="12">
    <source>
    </source>
</evidence>
<accession>P0CU38</accession>
<accession>A0A1D8PQE1</accession>
<accession>O74657</accession>
<accession>Q59QW1</accession>
<organism>
    <name type="scientific">Candida albicans (strain SC5314 / ATCC MYA-2876)</name>
    <name type="common">Yeast</name>
    <dbReference type="NCBI Taxonomy" id="237561"/>
    <lineage>
        <taxon>Eukaryota</taxon>
        <taxon>Fungi</taxon>
        <taxon>Dikarya</taxon>
        <taxon>Ascomycota</taxon>
        <taxon>Saccharomycotina</taxon>
        <taxon>Pichiomycetes</taxon>
        <taxon>Debaryomycetaceae</taxon>
        <taxon>Candida/Lodderomyces clade</taxon>
        <taxon>Candida</taxon>
    </lineage>
</organism>
<reference key="1">
    <citation type="journal article" date="2004" name="Proc. Natl. Acad. Sci. U.S.A.">
        <title>The diploid genome sequence of Candida albicans.</title>
        <authorList>
            <person name="Jones T."/>
            <person name="Federspiel N.A."/>
            <person name="Chibana H."/>
            <person name="Dungan J."/>
            <person name="Kalman S."/>
            <person name="Magee B.B."/>
            <person name="Newport G."/>
            <person name="Thorstenson Y.R."/>
            <person name="Agabian N."/>
            <person name="Magee P.T."/>
            <person name="Davis R.W."/>
            <person name="Scherer S."/>
        </authorList>
    </citation>
    <scope>NUCLEOTIDE SEQUENCE [LARGE SCALE GENOMIC DNA]</scope>
    <source>
        <strain>SC5314 / ATCC MYA-2876</strain>
    </source>
</reference>
<reference key="2">
    <citation type="journal article" date="2007" name="Genome Biol.">
        <title>Assembly of the Candida albicans genome into sixteen supercontigs aligned on the eight chromosomes.</title>
        <authorList>
            <person name="van het Hoog M."/>
            <person name="Rast T.J."/>
            <person name="Martchenko M."/>
            <person name="Grindle S."/>
            <person name="Dignard D."/>
            <person name="Hogues H."/>
            <person name="Cuomo C."/>
            <person name="Berriman M."/>
            <person name="Scherer S."/>
            <person name="Magee B.B."/>
            <person name="Whiteway M."/>
            <person name="Chibana H."/>
            <person name="Nantel A."/>
            <person name="Magee P.T."/>
        </authorList>
    </citation>
    <scope>GENOME REANNOTATION</scope>
    <source>
        <strain>SC5314 / ATCC MYA-2876</strain>
    </source>
</reference>
<reference key="3">
    <citation type="journal article" date="2013" name="Genome Biol.">
        <title>Assembly of a phased diploid Candida albicans genome facilitates allele-specific measurements and provides a simple model for repeat and indel structure.</title>
        <authorList>
            <person name="Muzzey D."/>
            <person name="Schwartz K."/>
            <person name="Weissman J.S."/>
            <person name="Sherlock G."/>
        </authorList>
    </citation>
    <scope>NUCLEOTIDE SEQUENCE [LARGE SCALE GENOMIC DNA]</scope>
    <scope>GENOME REANNOTATION</scope>
    <source>
        <strain>SC5314 / ATCC MYA-2876</strain>
    </source>
</reference>
<reference key="4">
    <citation type="journal article" date="1998" name="J. Bacteriol.">
        <title>Identification of Candida albicans ALS2 and ALS4 and localization of als proteins to the fungal cell surface.</title>
        <authorList>
            <person name="Hoyer L.L."/>
            <person name="Payne T.L."/>
            <person name="Hecht J.E."/>
        </authorList>
    </citation>
    <scope>FUNCTION</scope>
    <scope>SUBCELLULAR LOCATION</scope>
    <source>
        <strain>1161</strain>
    </source>
</reference>
<reference key="5">
    <citation type="journal article" date="2004" name="J. Biol. Chem.">
        <title>Functional and structural diversity in the Als protein family of Candida albicans.</title>
        <authorList>
            <person name="Sheppard D.C."/>
            <person name="Yeaman M.R."/>
            <person name="Welch W.H."/>
            <person name="Phan Q.T."/>
            <person name="Fu Y."/>
            <person name="Ibrahim A.S."/>
            <person name="Filler S.G."/>
            <person name="Zhang M."/>
            <person name="Waring A.J."/>
            <person name="Edwards J.E. Jr."/>
        </authorList>
    </citation>
    <scope>DOMAIN</scope>
</reference>
<reference key="6">
    <citation type="journal article" date="2005" name="Microbiology">
        <title>Analysis of the Candida albicans Als2p and Als4p adhesins suggests the potential for compensatory function within the Als family.</title>
        <authorList>
            <person name="Zhao X."/>
            <person name="Oh S.H."/>
            <person name="Yeater K.M."/>
            <person name="Hoyer L.L."/>
        </authorList>
    </citation>
    <scope>FUNCTION</scope>
</reference>
<reference key="7">
    <citation type="journal article" date="2005" name="Infect. Immun.">
        <title>Use of green fluorescent protein and reverse transcription-PCR to monitor Candida albicans agglutinin-like sequence gene expression in a murine model of disseminated candidiasis.</title>
        <authorList>
            <person name="Green C.B."/>
            <person name="Zhao X."/>
            <person name="Hoyer L.L."/>
        </authorList>
    </citation>
    <scope>INDUCTION</scope>
</reference>
<reference key="8">
    <citation type="journal article" date="2010" name="BMC Microbiol.">
        <title>Real-time PCR expression profiling of genes encoding potential virulence factors in Candida albicans biofilms: identification of model-dependent and -independent gene expression.</title>
        <authorList>
            <person name="Nailis H."/>
            <person name="Kucharikova S."/>
            <person name="Ricicova M."/>
            <person name="Van Dijck P."/>
            <person name="Deforce D."/>
            <person name="Nelis H."/>
            <person name="Coenye T."/>
        </authorList>
    </citation>
    <scope>INDUCTION</scope>
</reference>
<reference key="9">
    <citation type="journal article" date="2012" name="FEMS Immunol. Med. Microbiol.">
        <title>Profiling of adhesive properties of the agglutinin-like sequence (ALS) protein family, a virulent attribute of Candida albicans.</title>
        <authorList>
            <person name="Aoki W."/>
            <person name="Kitahara N."/>
            <person name="Miura N."/>
            <person name="Morisaka H."/>
            <person name="Kuroda K."/>
            <person name="Ueda M."/>
        </authorList>
    </citation>
    <scope>FUNCTION</scope>
</reference>
<reference key="10">
    <citation type="journal article" date="2012" name="Mol. Microbiol.">
        <title>Functional control of the Candida albicans cell wall by catalytic protein kinase A subunit Tpk1.</title>
        <authorList>
            <person name="Fanning S."/>
            <person name="Xu W."/>
            <person name="Beaurepaire C."/>
            <person name="Suhan J.P."/>
            <person name="Nantel A."/>
            <person name="Mitchell A.P."/>
        </authorList>
    </citation>
    <scope>FUNCTION</scope>
    <scope>INDUCTION</scope>
</reference>
<reference key="11">
    <citation type="journal article" date="2012" name="Mycoses">
        <title>Frequency and expression of ALS and HWP1 genotypes in Candida albicans strains isolated from Mexican patients suffering from vaginal candidosis.</title>
        <authorList>
            <person name="Monroy-Perez E."/>
            <person name="Sainz-Espunes T."/>
            <person name="Paniagua-Contreras G."/>
            <person name="Negrete-Abascal E."/>
            <person name="Rodriguez-Moctezuma J.R."/>
            <person name="Vaca S."/>
        </authorList>
    </citation>
    <scope>FUNCTION</scope>
</reference>
<keyword id="KW-0130">Cell adhesion</keyword>
<keyword id="KW-1003">Cell membrane</keyword>
<keyword id="KW-0134">Cell wall</keyword>
<keyword id="KW-1015">Disulfide bond</keyword>
<keyword id="KW-0325">Glycoprotein</keyword>
<keyword id="KW-0336">GPI-anchor</keyword>
<keyword id="KW-0449">Lipoprotein</keyword>
<keyword id="KW-0472">Membrane</keyword>
<keyword id="KW-1185">Reference proteome</keyword>
<keyword id="KW-0677">Repeat</keyword>
<keyword id="KW-0964">Secreted</keyword>
<keyword id="KW-0732">Signal</keyword>
<keyword id="KW-0843">Virulence</keyword>
<feature type="signal peptide" evidence="2">
    <location>
        <begin position="1"/>
        <end position="17"/>
    </location>
</feature>
<feature type="chain" id="PRO_0000020692" description="Agglutinin-like protein 2" evidence="2">
    <location>
        <begin position="18"/>
        <end position="2507"/>
    </location>
</feature>
<feature type="propeptide" id="PRO_0000439163" description="Removed in mature form" evidence="2">
    <location>
        <begin position="2508"/>
        <end position="2530"/>
    </location>
</feature>
<feature type="repeat" description="ALS 1">
    <location>
        <begin position="364"/>
        <end position="395"/>
    </location>
</feature>
<feature type="repeat" description="ALS 2">
    <location>
        <begin position="400"/>
        <end position="431"/>
    </location>
</feature>
<feature type="repeat" description="ALS 3">
    <location>
        <begin position="437"/>
        <end position="468"/>
    </location>
</feature>
<feature type="repeat" description="ALS 4">
    <location>
        <begin position="473"/>
        <end position="504"/>
    </location>
</feature>
<feature type="repeat" description="ALS 5">
    <location>
        <begin position="509"/>
        <end position="540"/>
    </location>
</feature>
<feature type="repeat" description="ALS 6">
    <location>
        <begin position="545"/>
        <end position="576"/>
    </location>
</feature>
<feature type="repeat" description="ALS 7">
    <location>
        <begin position="581"/>
        <end position="612"/>
    </location>
</feature>
<feature type="repeat" description="ALS 8">
    <location>
        <begin position="617"/>
        <end position="648"/>
    </location>
</feature>
<feature type="repeat" description="ALS 9">
    <location>
        <begin position="653"/>
        <end position="684"/>
    </location>
</feature>
<feature type="repeat" description="ALS 10">
    <location>
        <begin position="689"/>
        <end position="720"/>
    </location>
</feature>
<feature type="repeat" description="ALS 11">
    <location>
        <begin position="725"/>
        <end position="756"/>
    </location>
</feature>
<feature type="repeat" description="ALS 12">
    <location>
        <begin position="761"/>
        <end position="792"/>
    </location>
</feature>
<feature type="repeat" description="ALS 13">
    <location>
        <begin position="797"/>
        <end position="828"/>
    </location>
</feature>
<feature type="repeat" description="ALS 14">
    <location>
        <begin position="833"/>
        <end position="864"/>
    </location>
</feature>
<feature type="repeat" description="ALS 15">
    <location>
        <begin position="869"/>
        <end position="900"/>
    </location>
</feature>
<feature type="repeat" description="ALS 16">
    <location>
        <begin position="905"/>
        <end position="936"/>
    </location>
</feature>
<feature type="repeat" description="ALS 17">
    <location>
        <begin position="941"/>
        <end position="972"/>
    </location>
</feature>
<feature type="repeat" description="ALS 18">
    <location>
        <begin position="977"/>
        <end position="1008"/>
    </location>
</feature>
<feature type="repeat" description="ALS 19">
    <location>
        <begin position="1013"/>
        <end position="1044"/>
    </location>
</feature>
<feature type="repeat" description="ALS 20">
    <location>
        <begin position="1049"/>
        <end position="1077"/>
    </location>
</feature>
<feature type="repeat" description="ALS 21">
    <location>
        <begin position="1085"/>
        <end position="1116"/>
    </location>
</feature>
<feature type="repeat" description="ALS 22">
    <location>
        <begin position="1121"/>
        <end position="1152"/>
    </location>
</feature>
<feature type="repeat" description="ALS 23">
    <location>
        <begin position="1157"/>
        <end position="1188"/>
    </location>
</feature>
<feature type="repeat" description="ALS 24">
    <location>
        <begin position="1193"/>
        <end position="1224"/>
    </location>
</feature>
<feature type="repeat" description="ALS 25">
    <location>
        <begin position="1229"/>
        <end position="1260"/>
    </location>
</feature>
<feature type="repeat" description="ALS 26">
    <location>
        <begin position="1265"/>
        <end position="1296"/>
    </location>
</feature>
<feature type="repeat" description="ALS 27">
    <location>
        <begin position="1301"/>
        <end position="1332"/>
    </location>
</feature>
<feature type="repeat" description="ALS 28">
    <location>
        <begin position="1337"/>
        <end position="1368"/>
    </location>
</feature>
<feature type="repeat" description="ALS 29">
    <location>
        <begin position="1373"/>
        <end position="1404"/>
    </location>
</feature>
<feature type="repeat" description="ALS 30">
    <location>
        <begin position="1409"/>
        <end position="1440"/>
    </location>
</feature>
<feature type="repeat" description="ALS 31">
    <location>
        <begin position="1445"/>
        <end position="1476"/>
    </location>
</feature>
<feature type="repeat" description="ALS 32">
    <location>
        <begin position="1481"/>
        <end position="1512"/>
    </location>
</feature>
<feature type="repeat" description="ALS 33">
    <location>
        <begin position="1517"/>
        <end position="1548"/>
    </location>
</feature>
<feature type="repeat" description="ALS 34">
    <location>
        <begin position="1553"/>
        <end position="1584"/>
    </location>
</feature>
<feature type="repeat" description="ALS 35">
    <location>
        <begin position="1589"/>
        <end position="1620"/>
    </location>
</feature>
<feature type="repeat" description="ALS 36">
    <location>
        <begin position="1625"/>
        <end position="1656"/>
    </location>
</feature>
<feature type="repeat" description="ALS 37">
    <location>
        <begin position="1661"/>
        <end position="1692"/>
    </location>
</feature>
<feature type="repeat" description="ALS 38">
    <location>
        <begin position="1697"/>
        <end position="1728"/>
    </location>
</feature>
<feature type="repeat" description="ALS 39">
    <location>
        <begin position="1733"/>
        <end position="1764"/>
    </location>
</feature>
<feature type="repeat" description="ALS 40">
    <location>
        <begin position="1769"/>
        <end position="1800"/>
    </location>
</feature>
<feature type="repeat" description="ALS 41">
    <location>
        <begin position="1805"/>
        <end position="1836"/>
    </location>
</feature>
<feature type="repeat" description="ALS 42">
    <location>
        <begin position="1841"/>
        <end position="1872"/>
    </location>
</feature>
<feature type="repeat" description="ALS 43">
    <location>
        <begin position="1877"/>
        <end position="1907"/>
    </location>
</feature>
<feature type="repeat" description="ALS 44">
    <location>
        <begin position="1913"/>
        <end position="1944"/>
    </location>
</feature>
<feature type="repeat" description="ALS 45">
    <location>
        <begin position="1949"/>
        <end position="1980"/>
    </location>
</feature>
<feature type="repeat" description="ALS 46">
    <location>
        <begin position="1985"/>
        <end position="2016"/>
    </location>
</feature>
<feature type="repeat" description="ALS 47">
    <location>
        <begin position="2021"/>
        <end position="2052"/>
    </location>
</feature>
<feature type="repeat" description="ALS 48">
    <location>
        <begin position="2057"/>
        <end position="2088"/>
    </location>
</feature>
<feature type="repeat" description="ALS 49">
    <location>
        <begin position="2093"/>
        <end position="2124"/>
    </location>
</feature>
<feature type="repeat" description="ALS 50">
    <location>
        <begin position="2129"/>
        <end position="2157"/>
    </location>
</feature>
<feature type="region of interest" description="Disordered" evidence="4">
    <location>
        <begin position="954"/>
        <end position="975"/>
    </location>
</feature>
<feature type="region of interest" description="Disordered" evidence="4">
    <location>
        <begin position="2200"/>
        <end position="2235"/>
    </location>
</feature>
<feature type="region of interest" description="Disordered" evidence="4">
    <location>
        <begin position="2274"/>
        <end position="2494"/>
    </location>
</feature>
<feature type="compositionally biased region" description="Low complexity" evidence="4">
    <location>
        <begin position="954"/>
        <end position="967"/>
    </location>
</feature>
<feature type="compositionally biased region" description="Low complexity" evidence="4">
    <location>
        <begin position="2204"/>
        <end position="2233"/>
    </location>
</feature>
<feature type="compositionally biased region" description="Low complexity" evidence="4">
    <location>
        <begin position="2282"/>
        <end position="2296"/>
    </location>
</feature>
<feature type="compositionally biased region" description="Polar residues" evidence="4">
    <location>
        <begin position="2329"/>
        <end position="2420"/>
    </location>
</feature>
<feature type="compositionally biased region" description="Polar residues" evidence="4">
    <location>
        <begin position="2429"/>
        <end position="2452"/>
    </location>
</feature>
<feature type="compositionally biased region" description="Low complexity" evidence="4">
    <location>
        <begin position="2453"/>
        <end position="2471"/>
    </location>
</feature>
<feature type="compositionally biased region" description="Low complexity" evidence="4">
    <location>
        <begin position="2482"/>
        <end position="2494"/>
    </location>
</feature>
<feature type="lipid moiety-binding region" description="GPI-anchor amidated aspartate" evidence="2">
    <location>
        <position position="2507"/>
    </location>
</feature>
<feature type="glycosylation site" description="N-linked (GlcNAc...) asparagine" evidence="3">
    <location>
        <position position="253"/>
    </location>
</feature>
<feature type="glycosylation site" description="N-linked (GlcNAc...) asparagine" evidence="3">
    <location>
        <position position="315"/>
    </location>
</feature>
<feature type="glycosylation site" description="N-linked (GlcNAc...) asparagine" evidence="3">
    <location>
        <position position="578"/>
    </location>
</feature>
<feature type="glycosylation site" description="N-linked (GlcNAc...) asparagine" evidence="3">
    <location>
        <position position="614"/>
    </location>
</feature>
<feature type="glycosylation site" description="N-linked (GlcNAc...) asparagine" evidence="3">
    <location>
        <position position="866"/>
    </location>
</feature>
<feature type="glycosylation site" description="N-linked (GlcNAc...) asparagine" evidence="3">
    <location>
        <position position="1010"/>
    </location>
</feature>
<feature type="glycosylation site" description="N-linked (GlcNAc...) asparagine" evidence="3">
    <location>
        <position position="1154"/>
    </location>
</feature>
<feature type="glycosylation site" description="N-linked (GlcNAc...) asparagine" evidence="3">
    <location>
        <position position="1370"/>
    </location>
</feature>
<feature type="glycosylation site" description="N-linked (GlcNAc...) asparagine" evidence="3">
    <location>
        <position position="1406"/>
    </location>
</feature>
<feature type="glycosylation site" description="N-linked (GlcNAc...) asparagine" evidence="3">
    <location>
        <position position="1442"/>
    </location>
</feature>
<feature type="glycosylation site" description="N-linked (GlcNAc...) asparagine" evidence="3">
    <location>
        <position position="1514"/>
    </location>
</feature>
<feature type="glycosylation site" description="N-linked (GlcNAc...) asparagine" evidence="3">
    <location>
        <position position="1550"/>
    </location>
</feature>
<feature type="glycosylation site" description="N-linked (GlcNAc...) asparagine" evidence="3">
    <location>
        <position position="1586"/>
    </location>
</feature>
<feature type="glycosylation site" description="N-linked (GlcNAc...) asparagine" evidence="3">
    <location>
        <position position="1622"/>
    </location>
</feature>
<feature type="glycosylation site" description="N-linked (GlcNAc...) asparagine" evidence="3">
    <location>
        <position position="1658"/>
    </location>
</feature>
<feature type="glycosylation site" description="N-linked (GlcNAc...) asparagine" evidence="3">
    <location>
        <position position="1730"/>
    </location>
</feature>
<feature type="glycosylation site" description="N-linked (GlcNAc...) asparagine" evidence="3">
    <location>
        <position position="1766"/>
    </location>
</feature>
<feature type="glycosylation site" description="N-linked (GlcNAc...) asparagine" evidence="3">
    <location>
        <position position="1838"/>
    </location>
</feature>
<feature type="glycosylation site" description="N-linked (GlcNAc...) asparagine" evidence="3">
    <location>
        <position position="1910"/>
    </location>
</feature>
<feature type="glycosylation site" description="N-linked (GlcNAc...) asparagine" evidence="3">
    <location>
        <position position="1982"/>
    </location>
</feature>
<feature type="glycosylation site" description="N-linked (GlcNAc...) asparagine" evidence="3">
    <location>
        <position position="2090"/>
    </location>
</feature>
<feature type="glycosylation site" description="N-linked (GlcNAc...) asparagine" evidence="3">
    <location>
        <position position="2197"/>
    </location>
</feature>
<feature type="glycosylation site" description="N-linked (GlcNAc...) asparagine" evidence="3">
    <location>
        <position position="2281"/>
    </location>
</feature>
<feature type="glycosylation site" description="N-linked (GlcNAc...) asparagine" evidence="3">
    <location>
        <position position="2444"/>
    </location>
</feature>
<feature type="glycosylation site" description="N-linked (GlcNAc...) asparagine" evidence="3">
    <location>
        <position position="2466"/>
    </location>
</feature>
<feature type="disulfide bond" evidence="1">
    <location>
        <begin position="73"/>
        <end position="150"/>
    </location>
</feature>
<feature type="disulfide bond" evidence="1">
    <location>
        <begin position="96"/>
        <end position="112"/>
    </location>
</feature>
<feature type="disulfide bond" evidence="1">
    <location>
        <begin position="205"/>
        <end position="297"/>
    </location>
</feature>
<feature type="disulfide bond" evidence="1">
    <location>
        <begin position="227"/>
        <end position="256"/>
    </location>
</feature>
<proteinExistence type="evidence at transcript level"/>
<name>ALS2_CANAL</name>
<dbReference type="EMBL" id="CP017628">
    <property type="protein sequence ID" value="AOW30356.1"/>
    <property type="status" value="ALT_FRAME"/>
    <property type="molecule type" value="Genomic_DNA"/>
</dbReference>
<dbReference type="RefSeq" id="XP_712646.2">
    <property type="nucleotide sequence ID" value="XM_707553.2"/>
</dbReference>
<dbReference type="SMR" id="P0CU38"/>
<dbReference type="STRING" id="237561.P0CU38"/>
<dbReference type="GlyCosmos" id="P0CU38">
    <property type="glycosylation" value="25 sites, No reported glycans"/>
</dbReference>
<dbReference type="GeneID" id="3645724"/>
<dbReference type="KEGG" id="cal:CAALFM_C604380WA"/>
<dbReference type="eggNOG" id="ENOG502RGCG">
    <property type="taxonomic scope" value="Eukaryota"/>
</dbReference>
<dbReference type="InParanoid" id="P0CU38"/>
<dbReference type="OrthoDB" id="4023732at2759"/>
<dbReference type="Proteomes" id="UP000000559">
    <property type="component" value="Chromosome 6"/>
</dbReference>
<dbReference type="GO" id="GO:0009986">
    <property type="term" value="C:cell surface"/>
    <property type="evidence" value="ECO:0000318"/>
    <property type="project" value="GO_Central"/>
</dbReference>
<dbReference type="GO" id="GO:1903561">
    <property type="term" value="C:extracellular vesicle"/>
    <property type="evidence" value="ECO:0000318"/>
    <property type="project" value="GO_Central"/>
</dbReference>
<dbReference type="GO" id="GO:0030446">
    <property type="term" value="C:hyphal cell wall"/>
    <property type="evidence" value="ECO:0000318"/>
    <property type="project" value="GO_Central"/>
</dbReference>
<dbReference type="GO" id="GO:0005886">
    <property type="term" value="C:plasma membrane"/>
    <property type="evidence" value="ECO:0007669"/>
    <property type="project" value="UniProtKB-SubCell"/>
</dbReference>
<dbReference type="GO" id="GO:0098552">
    <property type="term" value="C:side of membrane"/>
    <property type="evidence" value="ECO:0007669"/>
    <property type="project" value="UniProtKB-KW"/>
</dbReference>
<dbReference type="GO" id="GO:0030445">
    <property type="term" value="C:yeast-form cell wall"/>
    <property type="evidence" value="ECO:0000318"/>
    <property type="project" value="GO_Central"/>
</dbReference>
<dbReference type="GO" id="GO:0043710">
    <property type="term" value="P:cell adhesion involved in multi-species biofilm formation"/>
    <property type="evidence" value="ECO:0000318"/>
    <property type="project" value="GO_Central"/>
</dbReference>
<dbReference type="GO" id="GO:0043709">
    <property type="term" value="P:cell adhesion involved in single-species biofilm formation"/>
    <property type="evidence" value="ECO:0000318"/>
    <property type="project" value="GO_Central"/>
</dbReference>
<dbReference type="GO" id="GO:0098609">
    <property type="term" value="P:cell-cell adhesion"/>
    <property type="evidence" value="ECO:0000318"/>
    <property type="project" value="GO_Central"/>
</dbReference>
<dbReference type="GO" id="GO:0030448">
    <property type="term" value="P:hyphal growth"/>
    <property type="evidence" value="ECO:0000318"/>
    <property type="project" value="GO_Central"/>
</dbReference>
<dbReference type="GO" id="GO:0044011">
    <property type="term" value="P:single-species biofilm formation on inanimate substrate"/>
    <property type="evidence" value="ECO:0000318"/>
    <property type="project" value="GO_Central"/>
</dbReference>
<dbReference type="FunFam" id="2.60.40.1280:FF:000001">
    <property type="entry name" value="Agglutinin-like protein 3"/>
    <property type="match status" value="1"/>
</dbReference>
<dbReference type="Gene3D" id="2.60.40.1280">
    <property type="match status" value="1"/>
</dbReference>
<dbReference type="Gene3D" id="2.60.40.2430">
    <property type="entry name" value="Agglutinin-like protein, N-terminal domain, N2 subdomain"/>
    <property type="match status" value="1"/>
</dbReference>
<dbReference type="InterPro" id="IPR008966">
    <property type="entry name" value="Adhesion_dom_sf"/>
</dbReference>
<dbReference type="InterPro" id="IPR008440">
    <property type="entry name" value="Agglutinin-like_ALS_rpt"/>
</dbReference>
<dbReference type="InterPro" id="IPR024672">
    <property type="entry name" value="Agglutinin-like_N"/>
</dbReference>
<dbReference type="InterPro" id="IPR043063">
    <property type="entry name" value="Agglutinin-like_N_N2"/>
</dbReference>
<dbReference type="InterPro" id="IPR033504">
    <property type="entry name" value="ALS"/>
</dbReference>
<dbReference type="InterPro" id="IPR011252">
    <property type="entry name" value="Fibrogen-bd_dom1"/>
</dbReference>
<dbReference type="PANTHER" id="PTHR33793:SF2">
    <property type="entry name" value="AGGLUTININ-LIKE PROTEIN 6"/>
    <property type="match status" value="1"/>
</dbReference>
<dbReference type="PANTHER" id="PTHR33793">
    <property type="entry name" value="ALPHA-AGGLUTININ"/>
    <property type="match status" value="1"/>
</dbReference>
<dbReference type="Pfam" id="PF05792">
    <property type="entry name" value="Candida_ALS"/>
    <property type="match status" value="50"/>
</dbReference>
<dbReference type="Pfam" id="PF11766">
    <property type="entry name" value="Candida_ALS_N"/>
    <property type="match status" value="1"/>
</dbReference>
<dbReference type="SMART" id="SM01056">
    <property type="entry name" value="Candida_ALS_N"/>
    <property type="match status" value="1"/>
</dbReference>
<dbReference type="SUPFAM" id="SSF49401">
    <property type="entry name" value="Bacterial adhesins"/>
    <property type="match status" value="1"/>
</dbReference>
<protein>
    <recommendedName>
        <fullName>Agglutinin-like protein 2</fullName>
    </recommendedName>
    <alternativeName>
        <fullName>Adhesin 2</fullName>
    </alternativeName>
</protein>
<comment type="function">
    <text evidence="7 8 9">Cell surface adhesion protein which mediates both yeast-to-host tissue adherence and yeast aggregation. Plays an important role in the pathogenesis of C.albicans infections.</text>
</comment>
<comment type="subcellular location">
    <subcellularLocation>
        <location>Cell membrane</location>
        <topology evidence="2">Lipid-anchor</topology>
        <topology evidence="2">GPI-anchor</topology>
    </subcellularLocation>
    <subcellularLocation>
        <location evidence="12">Secreted</location>
        <location evidence="12">Cell wall</location>
    </subcellularLocation>
    <text evidence="10">Identified as covalently-linked GPI-modified cell wall protein (GPI-CWP) in the outer cell wall layer.</text>
</comment>
<comment type="induction">
    <text evidence="5 6 9">Highly expressed in biofilms with down-regulation during later stages of biofilm formation. Expression is repressed by TPK1 and SFL1, and induced by TPK2. Also under the control of TOR1. Expression is down-regulated by Riccardin D, a macrocyclic bisbibenzyl isolated from Chinese liverwort D.hirsute, which has an inhibitory effect on biofilms and virulence. Induced by caspofungin.</text>
</comment>
<comment type="domain">
    <text evidence="11">Each ALS protein has a similar three-domain structure, including a N-ter domain of 433-436 amino acids that is 55-90 percent identical across the family and which mediates adherence to various materials; a central domain of variable numbers of tandemly repeated copies of a 36 amino acid motif; and a C-ter; domain that is relatively variable in length and sequence across the family.</text>
</comment>
<comment type="PTM">
    <text evidence="10">N-glycosylated and O-glycosylated.</text>
</comment>
<comment type="PTM">
    <text evidence="12">The GPI-anchor is attached to the protein in the endoplasmic reticulum and serves to target the protein to the cell surface. There, the glucosamine-inositol phospholipid moiety is cleaved off and the GPI-modified mannoprotein is covalently attached via its lipidless GPI glycan remnant to the 1,6-beta-glucan of the outer cell wall layer.</text>
</comment>
<comment type="similarity">
    <text evidence="10">Belongs to the ALS family.</text>
</comment>
<comment type="sequence caution" evidence="10">
    <conflict type="frameshift">
        <sequence resource="EMBL-CDS" id="AOW30356"/>
    </conflict>
</comment>
<gene>
    <name type="primary">ALS2</name>
    <name type="ordered locus">CAALFM_C604380WA</name>
    <name type="ORF">CaO19.1097</name>
    <name type="ORF">CaO19.8699</name>
</gene>